<keyword id="KW-0963">Cytoplasm</keyword>
<keyword id="KW-0444">Lipid biosynthesis</keyword>
<keyword id="KW-0443">Lipid metabolism</keyword>
<keyword id="KW-0594">Phospholipid biosynthesis</keyword>
<keyword id="KW-1208">Phospholipid metabolism</keyword>
<keyword id="KW-0808">Transferase</keyword>
<name>PLSX_CHLTB</name>
<accession>B0BAR8</accession>
<reference key="1">
    <citation type="journal article" date="2008" name="Genome Res.">
        <title>Chlamydia trachomatis: genome sequence analysis of lymphogranuloma venereum isolates.</title>
        <authorList>
            <person name="Thomson N.R."/>
            <person name="Holden M.T.G."/>
            <person name="Carder C."/>
            <person name="Lennard N."/>
            <person name="Lockey S.J."/>
            <person name="Marsh P."/>
            <person name="Skipp P."/>
            <person name="O'Connor C.D."/>
            <person name="Goodhead I."/>
            <person name="Norbertzcak H."/>
            <person name="Harris B."/>
            <person name="Ormond D."/>
            <person name="Rance R."/>
            <person name="Quail M.A."/>
            <person name="Parkhill J."/>
            <person name="Stephens R.S."/>
            <person name="Clarke I.N."/>
        </authorList>
    </citation>
    <scope>NUCLEOTIDE SEQUENCE [LARGE SCALE GENOMIC DNA]</scope>
    <source>
        <strain>UCH-1/proctitis</strain>
    </source>
</reference>
<protein>
    <recommendedName>
        <fullName evidence="1">Phosphate acyltransferase</fullName>
        <ecNumber evidence="1">2.3.1.274</ecNumber>
    </recommendedName>
    <alternativeName>
        <fullName evidence="1">Acyl-ACP phosphotransacylase</fullName>
    </alternativeName>
    <alternativeName>
        <fullName evidence="1">Acyl-[acyl-carrier-protein]--phosphate acyltransferase</fullName>
    </alternativeName>
    <alternativeName>
        <fullName evidence="1">Phosphate-acyl-ACP acyltransferase</fullName>
    </alternativeName>
</protein>
<dbReference type="EC" id="2.3.1.274" evidence="1"/>
<dbReference type="EMBL" id="AM884177">
    <property type="protein sequence ID" value="CAP06580.1"/>
    <property type="molecule type" value="Genomic_DNA"/>
</dbReference>
<dbReference type="RefSeq" id="WP_009872947.1">
    <property type="nucleotide sequence ID" value="NC_010280.2"/>
</dbReference>
<dbReference type="SMR" id="B0BAR8"/>
<dbReference type="KEGG" id="ctl:CTLon_0182"/>
<dbReference type="HOGENOM" id="CLU_039379_1_1_0"/>
<dbReference type="UniPathway" id="UPA00085"/>
<dbReference type="Proteomes" id="UP001154401">
    <property type="component" value="Chromosome"/>
</dbReference>
<dbReference type="GO" id="GO:0005737">
    <property type="term" value="C:cytoplasm"/>
    <property type="evidence" value="ECO:0007669"/>
    <property type="project" value="UniProtKB-SubCell"/>
</dbReference>
<dbReference type="GO" id="GO:0043811">
    <property type="term" value="F:phosphate:acyl-[acyl carrier protein] acyltransferase activity"/>
    <property type="evidence" value="ECO:0007669"/>
    <property type="project" value="UniProtKB-UniRule"/>
</dbReference>
<dbReference type="GO" id="GO:0006633">
    <property type="term" value="P:fatty acid biosynthetic process"/>
    <property type="evidence" value="ECO:0007669"/>
    <property type="project" value="UniProtKB-UniRule"/>
</dbReference>
<dbReference type="GO" id="GO:0008654">
    <property type="term" value="P:phospholipid biosynthetic process"/>
    <property type="evidence" value="ECO:0007669"/>
    <property type="project" value="UniProtKB-KW"/>
</dbReference>
<dbReference type="Gene3D" id="3.40.718.10">
    <property type="entry name" value="Isopropylmalate Dehydrogenase"/>
    <property type="match status" value="1"/>
</dbReference>
<dbReference type="HAMAP" id="MF_00019">
    <property type="entry name" value="PlsX"/>
    <property type="match status" value="1"/>
</dbReference>
<dbReference type="InterPro" id="IPR003664">
    <property type="entry name" value="FA_synthesis"/>
</dbReference>
<dbReference type="InterPro" id="IPR012281">
    <property type="entry name" value="Phospholipid_synth_PlsX-like"/>
</dbReference>
<dbReference type="NCBIfam" id="NF010420">
    <property type="entry name" value="PRK13846.1"/>
    <property type="match status" value="1"/>
</dbReference>
<dbReference type="PANTHER" id="PTHR30100">
    <property type="entry name" value="FATTY ACID/PHOSPHOLIPID SYNTHESIS PROTEIN PLSX"/>
    <property type="match status" value="1"/>
</dbReference>
<dbReference type="PANTHER" id="PTHR30100:SF1">
    <property type="entry name" value="PHOSPHATE ACYLTRANSFERASE"/>
    <property type="match status" value="1"/>
</dbReference>
<dbReference type="Pfam" id="PF02504">
    <property type="entry name" value="FA_synthesis"/>
    <property type="match status" value="1"/>
</dbReference>
<dbReference type="PIRSF" id="PIRSF002465">
    <property type="entry name" value="Phsphlp_syn_PlsX"/>
    <property type="match status" value="1"/>
</dbReference>
<dbReference type="SUPFAM" id="SSF53659">
    <property type="entry name" value="Isocitrate/Isopropylmalate dehydrogenase-like"/>
    <property type="match status" value="1"/>
</dbReference>
<sequence>MKVRLGVDMMGGDHDPLVVWEALGEVLLSSTGEQPVEFTVFATSDVHHQLMNSPLSRSVRIVTAEDFVSMEDSLLAAVRKKRSSMALGLDALQQGDLDGFVSSGNTAALVTLARSKIPMIPAVPRPALLVSVPTLSGFAVILDVGATVSVNPDEMVGFARMGLAYRQSLSSNSNQPFTLGLLNIGSEERKGTDSHKQTFRMLRNIFGSAFLGNIESGDVFSGKVDIVVTDGFTGNVFLKTAEGLFDFLRHILGDRLEKSIKMQFDYTIYPGSIISGLSRLVIKCHGKSHGTALFGGISGAIDLARANVCSRIADRFGDNVV</sequence>
<evidence type="ECO:0000255" key="1">
    <source>
        <dbReference type="HAMAP-Rule" id="MF_00019"/>
    </source>
</evidence>
<proteinExistence type="inferred from homology"/>
<comment type="function">
    <text evidence="1">Catalyzes the reversible formation of acyl-phosphate (acyl-PO(4)) from acyl-[acyl-carrier-protein] (acyl-ACP). This enzyme utilizes acyl-ACP as fatty acyl donor, but not acyl-CoA.</text>
</comment>
<comment type="catalytic activity">
    <reaction evidence="1">
        <text>a fatty acyl-[ACP] + phosphate = an acyl phosphate + holo-[ACP]</text>
        <dbReference type="Rhea" id="RHEA:42292"/>
        <dbReference type="Rhea" id="RHEA-COMP:9685"/>
        <dbReference type="Rhea" id="RHEA-COMP:14125"/>
        <dbReference type="ChEBI" id="CHEBI:43474"/>
        <dbReference type="ChEBI" id="CHEBI:59918"/>
        <dbReference type="ChEBI" id="CHEBI:64479"/>
        <dbReference type="ChEBI" id="CHEBI:138651"/>
        <dbReference type="EC" id="2.3.1.274"/>
    </reaction>
</comment>
<comment type="pathway">
    <text evidence="1">Lipid metabolism; phospholipid metabolism.</text>
</comment>
<comment type="subunit">
    <text evidence="1">Homodimer. Probably interacts with PlsY.</text>
</comment>
<comment type="subcellular location">
    <subcellularLocation>
        <location evidence="1">Cytoplasm</location>
    </subcellularLocation>
    <text evidence="1">Associated with the membrane possibly through PlsY.</text>
</comment>
<comment type="similarity">
    <text evidence="1">Belongs to the PlsX family.</text>
</comment>
<feature type="chain" id="PRO_1000089890" description="Phosphate acyltransferase">
    <location>
        <begin position="1"/>
        <end position="321"/>
    </location>
</feature>
<gene>
    <name evidence="1" type="primary">plsX</name>
    <name type="ordered locus">CTLon_0182</name>
</gene>
<organism>
    <name type="scientific">Chlamydia trachomatis serovar L2b (strain UCH-1/proctitis)</name>
    <dbReference type="NCBI Taxonomy" id="471473"/>
    <lineage>
        <taxon>Bacteria</taxon>
        <taxon>Pseudomonadati</taxon>
        <taxon>Chlamydiota</taxon>
        <taxon>Chlamydiia</taxon>
        <taxon>Chlamydiales</taxon>
        <taxon>Chlamydiaceae</taxon>
        <taxon>Chlamydia/Chlamydophila group</taxon>
        <taxon>Chlamydia</taxon>
    </lineage>
</organism>